<gene>
    <name type="primary">vlpA</name>
</gene>
<accession>P29228</accession>
<name>VLPA_MESHY</name>
<evidence type="ECO:0000256" key="1">
    <source>
        <dbReference type="SAM" id="MobiDB-lite"/>
    </source>
</evidence>
<evidence type="ECO:0000305" key="2"/>
<sequence length="176" mass="17441">MKKSIFSKKLLVSFGSLVALAAIPLIAISCGQTDNNSSQSQQPGSGTTNTSGGTNSSGSTNGTAGTNSSGSTNGSGNGSNSETNTGNKTTSESNSGSSTGSQAGTTTNTGSGSNSESGMNSEKTENTQQSEAPGTNTGNKTTSESNSESGMNSEKTENTQQSEAPGTKTENTQHTS</sequence>
<keyword id="KW-1003">Cell membrane</keyword>
<keyword id="KW-0449">Lipoprotein</keyword>
<keyword id="KW-0472">Membrane</keyword>
<keyword id="KW-0564">Palmitate</keyword>
<keyword id="KW-0677">Repeat</keyword>
<keyword id="KW-0732">Signal</keyword>
<organism>
    <name type="scientific">Mesomycoplasma hyorhinis</name>
    <name type="common">Mycoplasma hyorhinis</name>
    <dbReference type="NCBI Taxonomy" id="2100"/>
    <lineage>
        <taxon>Bacteria</taxon>
        <taxon>Bacillati</taxon>
        <taxon>Mycoplasmatota</taxon>
        <taxon>Mycoplasmoidales</taxon>
        <taxon>Metamycoplasmataceae</taxon>
        <taxon>Mesomycoplasma</taxon>
    </lineage>
</organism>
<protein>
    <recommendedName>
        <fullName>Variant surface antigen A</fullName>
    </recommendedName>
    <alternativeName>
        <fullName>VlpA prolipoprotein</fullName>
    </alternativeName>
</protein>
<comment type="function">
    <text>Responsible for the antigenic diversity for host adaptation.</text>
</comment>
<comment type="subcellular location">
    <subcellularLocation>
        <location evidence="2">Cell membrane</location>
        <topology evidence="2">Lipid-anchor</topology>
    </subcellularLocation>
</comment>
<comment type="miscellaneous">
    <text>The numbers of repeats can vary and is one of the basis of the antigenic diversity.</text>
</comment>
<dbReference type="EMBL" id="X62936">
    <property type="protein sequence ID" value="CAA44708.2"/>
    <property type="molecule type" value="Genomic_DNA"/>
</dbReference>
<dbReference type="PIR" id="S18651">
    <property type="entry name" value="S18651"/>
</dbReference>
<dbReference type="GO" id="GO:0005886">
    <property type="term" value="C:plasma membrane"/>
    <property type="evidence" value="ECO:0007669"/>
    <property type="project" value="UniProtKB-SubCell"/>
</dbReference>
<dbReference type="InterPro" id="IPR049890">
    <property type="entry name" value="VlpA-F-like_signal"/>
</dbReference>
<dbReference type="InterPro" id="IPR054818">
    <property type="entry name" value="VlpA_N"/>
</dbReference>
<dbReference type="NCBIfam" id="NF033817">
    <property type="entry name" value="Mplas_variab_LP"/>
    <property type="match status" value="1"/>
</dbReference>
<dbReference type="NCBIfam" id="NF045729">
    <property type="entry name" value="VlpA_Nterm"/>
    <property type="match status" value="1"/>
</dbReference>
<dbReference type="PROSITE" id="PS51257">
    <property type="entry name" value="PROKAR_LIPOPROTEIN"/>
    <property type="match status" value="1"/>
</dbReference>
<proteinExistence type="predicted"/>
<feature type="signal peptide" evidence="2">
    <location>
        <begin position="1"/>
        <end position="29"/>
    </location>
</feature>
<feature type="chain" id="PRO_0000018213" description="Variant surface antigen A">
    <location>
        <begin position="30"/>
        <end position="176"/>
    </location>
</feature>
<feature type="repeat" description="1">
    <location>
        <begin position="123"/>
        <end position="135"/>
    </location>
</feature>
<feature type="repeat" description="2">
    <location>
        <begin position="155"/>
        <end position="167"/>
    </location>
</feature>
<feature type="repeat" description="3; truncated">
    <location>
        <begin position="168"/>
        <end position="176"/>
    </location>
</feature>
<feature type="region of interest" description="Disordered" evidence="1">
    <location>
        <begin position="33"/>
        <end position="176"/>
    </location>
</feature>
<feature type="region of interest" description="2.5 X 13 AA repeats">
    <location>
        <begin position="123"/>
        <end position="176"/>
    </location>
</feature>
<feature type="compositionally biased region" description="Low complexity" evidence="1">
    <location>
        <begin position="35"/>
        <end position="121"/>
    </location>
</feature>
<feature type="compositionally biased region" description="Polar residues" evidence="1">
    <location>
        <begin position="126"/>
        <end position="142"/>
    </location>
</feature>
<feature type="compositionally biased region" description="Low complexity" evidence="1">
    <location>
        <begin position="143"/>
        <end position="153"/>
    </location>
</feature>
<feature type="compositionally biased region" description="Polar residues" evidence="1">
    <location>
        <begin position="158"/>
        <end position="176"/>
    </location>
</feature>
<feature type="lipid moiety-binding region" description="N-palmitoyl cysteine" evidence="2">
    <location>
        <position position="30"/>
    </location>
</feature>
<feature type="lipid moiety-binding region" description="S-diacylglycerol cysteine" evidence="2">
    <location>
        <position position="30"/>
    </location>
</feature>
<reference key="1">
    <citation type="journal article" date="1991" name="EMBO J.">
        <title>Molecular basis of Mycoplasma surface antigenic variation: a novel set of divergent genes undergo spontaneous mutation of periodic coding regions and 5' regulatory sequences.</title>
        <authorList>
            <person name="Yogev D."/>
            <person name="Rosengarten R."/>
            <person name="Watson-Mckown R."/>
            <person name="Wise K.S."/>
        </authorList>
    </citation>
    <scope>NUCLEOTIDE SEQUENCE [GENOMIC DNA]</scope>
    <source>
        <strain>SK76</strain>
    </source>
</reference>
<reference key="2">
    <citation type="submission" date="1999-03" db="EMBL/GenBank/DDBJ databases">
        <authorList>
            <person name="Wise K.S."/>
        </authorList>
    </citation>
    <scope>SEQUENCE REVISION</scope>
</reference>